<organism>
    <name type="scientific">Escherichia fergusonii (strain ATCC 35469 / DSM 13698 / CCUG 18766 / IAM 14443 / JCM 21226 / LMG 7866 / NBRC 102419 / NCTC 12128 / CDC 0568-73)</name>
    <dbReference type="NCBI Taxonomy" id="585054"/>
    <lineage>
        <taxon>Bacteria</taxon>
        <taxon>Pseudomonadati</taxon>
        <taxon>Pseudomonadota</taxon>
        <taxon>Gammaproteobacteria</taxon>
        <taxon>Enterobacterales</taxon>
        <taxon>Enterobacteriaceae</taxon>
        <taxon>Escherichia</taxon>
    </lineage>
</organism>
<accession>B7LK02</accession>
<evidence type="ECO:0000255" key="1">
    <source>
        <dbReference type="HAMAP-Rule" id="MF_00246"/>
    </source>
</evidence>
<sequence length="382" mass="41427">MSLKEKTQSLFANAFGYPATHTIQAPGRVNLIGEHTDYNDGFVLPCAIDYQTVISCAPRDDRNVRVMAADYENQLDEFSLDAPIVAHENYQWANYVRGVVKHLQLRNNSFGGVDMVISGNVPQGAGLSSSASLEVAVGTVLQQLYHLPLDGAQIALNGQEAENQFVGCNCGIMDQLISALGKKNHALLIDCRSLGTKAVSMPKGVAVVIINSNFKRTLVGSEYNTRREQCETGARFFQQPALRDVTIEEFNAVAHELDPIVAKRVRHILTENARTVEAASALEQGDLKRMGELMAESHASMRDDFEITVPQIDTLVEIVKAVIGDKGGVRMTGGGFGGCIVALIPEELVPAVQQAVAEQYEAKTGIKETFYVCKPSQGAGQC</sequence>
<proteinExistence type="inferred from homology"/>
<protein>
    <recommendedName>
        <fullName evidence="1">Galactokinase</fullName>
        <ecNumber evidence="1">2.7.1.6</ecNumber>
    </recommendedName>
    <alternativeName>
        <fullName evidence="1">Galactose kinase</fullName>
    </alternativeName>
</protein>
<comment type="function">
    <text evidence="1">Catalyzes the transfer of the gamma-phosphate of ATP to D-galactose to form alpha-D-galactose-1-phosphate (Gal-1-P).</text>
</comment>
<comment type="catalytic activity">
    <reaction evidence="1">
        <text>alpha-D-galactose + ATP = alpha-D-galactose 1-phosphate + ADP + H(+)</text>
        <dbReference type="Rhea" id="RHEA:13553"/>
        <dbReference type="ChEBI" id="CHEBI:15378"/>
        <dbReference type="ChEBI" id="CHEBI:28061"/>
        <dbReference type="ChEBI" id="CHEBI:30616"/>
        <dbReference type="ChEBI" id="CHEBI:58336"/>
        <dbReference type="ChEBI" id="CHEBI:456216"/>
        <dbReference type="EC" id="2.7.1.6"/>
    </reaction>
</comment>
<comment type="pathway">
    <text evidence="1">Carbohydrate metabolism; galactose metabolism.</text>
</comment>
<comment type="subcellular location">
    <subcellularLocation>
        <location evidence="1">Cytoplasm</location>
    </subcellularLocation>
</comment>
<comment type="similarity">
    <text evidence="1">Belongs to the GHMP kinase family. GalK subfamily.</text>
</comment>
<feature type="chain" id="PRO_1000190064" description="Galactokinase">
    <location>
        <begin position="1"/>
        <end position="382"/>
    </location>
</feature>
<feature type="active site" description="Proton acceptor" evidence="1">
    <location>
        <position position="174"/>
    </location>
</feature>
<feature type="binding site" evidence="1">
    <location>
        <begin position="34"/>
        <end position="37"/>
    </location>
    <ligand>
        <name>substrate</name>
    </ligand>
</feature>
<feature type="binding site" evidence="1">
    <location>
        <begin position="124"/>
        <end position="130"/>
    </location>
    <ligand>
        <name>ATP</name>
        <dbReference type="ChEBI" id="CHEBI:30616"/>
    </ligand>
</feature>
<feature type="binding site" evidence="1">
    <location>
        <position position="130"/>
    </location>
    <ligand>
        <name>Mg(2+)</name>
        <dbReference type="ChEBI" id="CHEBI:18420"/>
    </ligand>
</feature>
<feature type="binding site" evidence="1">
    <location>
        <position position="162"/>
    </location>
    <ligand>
        <name>Mg(2+)</name>
        <dbReference type="ChEBI" id="CHEBI:18420"/>
    </ligand>
</feature>
<feature type="binding site" evidence="1">
    <location>
        <position position="223"/>
    </location>
    <ligand>
        <name>substrate</name>
    </ligand>
</feature>
<feature type="site" description="Transition state stabilizer" evidence="1">
    <location>
        <position position="28"/>
    </location>
</feature>
<gene>
    <name evidence="1" type="primary">galK</name>
    <name type="ordered locus">EFER_2352</name>
</gene>
<reference key="1">
    <citation type="journal article" date="2009" name="PLoS Genet.">
        <title>Organised genome dynamics in the Escherichia coli species results in highly diverse adaptive paths.</title>
        <authorList>
            <person name="Touchon M."/>
            <person name="Hoede C."/>
            <person name="Tenaillon O."/>
            <person name="Barbe V."/>
            <person name="Baeriswyl S."/>
            <person name="Bidet P."/>
            <person name="Bingen E."/>
            <person name="Bonacorsi S."/>
            <person name="Bouchier C."/>
            <person name="Bouvet O."/>
            <person name="Calteau A."/>
            <person name="Chiapello H."/>
            <person name="Clermont O."/>
            <person name="Cruveiller S."/>
            <person name="Danchin A."/>
            <person name="Diard M."/>
            <person name="Dossat C."/>
            <person name="Karoui M.E."/>
            <person name="Frapy E."/>
            <person name="Garry L."/>
            <person name="Ghigo J.M."/>
            <person name="Gilles A.M."/>
            <person name="Johnson J."/>
            <person name="Le Bouguenec C."/>
            <person name="Lescat M."/>
            <person name="Mangenot S."/>
            <person name="Martinez-Jehanne V."/>
            <person name="Matic I."/>
            <person name="Nassif X."/>
            <person name="Oztas S."/>
            <person name="Petit M.A."/>
            <person name="Pichon C."/>
            <person name="Rouy Z."/>
            <person name="Ruf C.S."/>
            <person name="Schneider D."/>
            <person name="Tourret J."/>
            <person name="Vacherie B."/>
            <person name="Vallenet D."/>
            <person name="Medigue C."/>
            <person name="Rocha E.P.C."/>
            <person name="Denamur E."/>
        </authorList>
    </citation>
    <scope>NUCLEOTIDE SEQUENCE [LARGE SCALE GENOMIC DNA]</scope>
    <source>
        <strain>ATCC 35469 / DSM 13698 / BCRC 15582 / CCUG 18766 / IAM 14443 / JCM 21226 / LMG 7866 / NBRC 102419 / NCTC 12128 / CDC 0568-73</strain>
    </source>
</reference>
<name>GAL1_ESCF3</name>
<dbReference type="EC" id="2.7.1.6" evidence="1"/>
<dbReference type="EMBL" id="CU928158">
    <property type="protein sequence ID" value="CAQ89852.1"/>
    <property type="molecule type" value="Genomic_DNA"/>
</dbReference>
<dbReference type="RefSeq" id="WP_000053450.1">
    <property type="nucleotide sequence ID" value="NC_011740.1"/>
</dbReference>
<dbReference type="SMR" id="B7LK02"/>
<dbReference type="GeneID" id="75056619"/>
<dbReference type="KEGG" id="efe:EFER_2352"/>
<dbReference type="HOGENOM" id="CLU_017814_2_1_6"/>
<dbReference type="OrthoDB" id="250531at2"/>
<dbReference type="UniPathway" id="UPA00214"/>
<dbReference type="Proteomes" id="UP000000745">
    <property type="component" value="Chromosome"/>
</dbReference>
<dbReference type="GO" id="GO:0005829">
    <property type="term" value="C:cytosol"/>
    <property type="evidence" value="ECO:0007669"/>
    <property type="project" value="TreeGrafter"/>
</dbReference>
<dbReference type="GO" id="GO:0005524">
    <property type="term" value="F:ATP binding"/>
    <property type="evidence" value="ECO:0007669"/>
    <property type="project" value="UniProtKB-UniRule"/>
</dbReference>
<dbReference type="GO" id="GO:0004335">
    <property type="term" value="F:galactokinase activity"/>
    <property type="evidence" value="ECO:0007669"/>
    <property type="project" value="UniProtKB-UniRule"/>
</dbReference>
<dbReference type="GO" id="GO:0000287">
    <property type="term" value="F:magnesium ion binding"/>
    <property type="evidence" value="ECO:0007669"/>
    <property type="project" value="UniProtKB-UniRule"/>
</dbReference>
<dbReference type="GO" id="GO:0006012">
    <property type="term" value="P:galactose metabolic process"/>
    <property type="evidence" value="ECO:0007669"/>
    <property type="project" value="UniProtKB-UniRule"/>
</dbReference>
<dbReference type="FunFam" id="3.30.230.10:FF:000017">
    <property type="entry name" value="Galactokinase"/>
    <property type="match status" value="1"/>
</dbReference>
<dbReference type="FunFam" id="3.30.70.890:FF:000001">
    <property type="entry name" value="Galactokinase"/>
    <property type="match status" value="1"/>
</dbReference>
<dbReference type="Gene3D" id="3.30.230.10">
    <property type="match status" value="1"/>
</dbReference>
<dbReference type="Gene3D" id="3.30.70.890">
    <property type="entry name" value="GHMP kinase, C-terminal domain"/>
    <property type="match status" value="1"/>
</dbReference>
<dbReference type="HAMAP" id="MF_00246">
    <property type="entry name" value="Galactokinase"/>
    <property type="match status" value="1"/>
</dbReference>
<dbReference type="InterPro" id="IPR000705">
    <property type="entry name" value="Galactokinase"/>
</dbReference>
<dbReference type="InterPro" id="IPR022963">
    <property type="entry name" value="Galactokinase_bac"/>
</dbReference>
<dbReference type="InterPro" id="IPR019741">
    <property type="entry name" value="Galactokinase_CS"/>
</dbReference>
<dbReference type="InterPro" id="IPR019539">
    <property type="entry name" value="GalKase_N"/>
</dbReference>
<dbReference type="InterPro" id="IPR013750">
    <property type="entry name" value="GHMP_kinase_C_dom"/>
</dbReference>
<dbReference type="InterPro" id="IPR036554">
    <property type="entry name" value="GHMP_kinase_C_sf"/>
</dbReference>
<dbReference type="InterPro" id="IPR006204">
    <property type="entry name" value="GHMP_kinase_N_dom"/>
</dbReference>
<dbReference type="InterPro" id="IPR006203">
    <property type="entry name" value="GHMP_knse_ATP-bd_CS"/>
</dbReference>
<dbReference type="InterPro" id="IPR006206">
    <property type="entry name" value="Mevalonate/galactokinase"/>
</dbReference>
<dbReference type="InterPro" id="IPR020568">
    <property type="entry name" value="Ribosomal_Su5_D2-typ_SF"/>
</dbReference>
<dbReference type="InterPro" id="IPR014721">
    <property type="entry name" value="Ribsml_uS5_D2-typ_fold_subgr"/>
</dbReference>
<dbReference type="NCBIfam" id="TIGR00131">
    <property type="entry name" value="gal_kin"/>
    <property type="match status" value="1"/>
</dbReference>
<dbReference type="NCBIfam" id="NF003472">
    <property type="entry name" value="PRK05101.1"/>
    <property type="match status" value="1"/>
</dbReference>
<dbReference type="PANTHER" id="PTHR10457:SF7">
    <property type="entry name" value="GALACTOKINASE-RELATED"/>
    <property type="match status" value="1"/>
</dbReference>
<dbReference type="PANTHER" id="PTHR10457">
    <property type="entry name" value="MEVALONATE KINASE/GALACTOKINASE"/>
    <property type="match status" value="1"/>
</dbReference>
<dbReference type="Pfam" id="PF10509">
    <property type="entry name" value="GalKase_gal_bdg"/>
    <property type="match status" value="1"/>
</dbReference>
<dbReference type="Pfam" id="PF08544">
    <property type="entry name" value="GHMP_kinases_C"/>
    <property type="match status" value="1"/>
</dbReference>
<dbReference type="Pfam" id="PF00288">
    <property type="entry name" value="GHMP_kinases_N"/>
    <property type="match status" value="1"/>
</dbReference>
<dbReference type="PIRSF" id="PIRSF000530">
    <property type="entry name" value="Galactokinase"/>
    <property type="match status" value="1"/>
</dbReference>
<dbReference type="PRINTS" id="PR00473">
    <property type="entry name" value="GALCTOKINASE"/>
</dbReference>
<dbReference type="PRINTS" id="PR00959">
    <property type="entry name" value="MEVGALKINASE"/>
</dbReference>
<dbReference type="SUPFAM" id="SSF55060">
    <property type="entry name" value="GHMP Kinase, C-terminal domain"/>
    <property type="match status" value="1"/>
</dbReference>
<dbReference type="SUPFAM" id="SSF54211">
    <property type="entry name" value="Ribosomal protein S5 domain 2-like"/>
    <property type="match status" value="1"/>
</dbReference>
<dbReference type="PROSITE" id="PS00106">
    <property type="entry name" value="GALACTOKINASE"/>
    <property type="match status" value="1"/>
</dbReference>
<dbReference type="PROSITE" id="PS00627">
    <property type="entry name" value="GHMP_KINASES_ATP"/>
    <property type="match status" value="1"/>
</dbReference>
<keyword id="KW-0067">ATP-binding</keyword>
<keyword id="KW-0119">Carbohydrate metabolism</keyword>
<keyword id="KW-0963">Cytoplasm</keyword>
<keyword id="KW-0299">Galactose metabolism</keyword>
<keyword id="KW-0418">Kinase</keyword>
<keyword id="KW-0460">Magnesium</keyword>
<keyword id="KW-0479">Metal-binding</keyword>
<keyword id="KW-0547">Nucleotide-binding</keyword>
<keyword id="KW-0808">Transferase</keyword>